<comment type="function">
    <text evidence="1">F(1)F(0) ATP synthase produces ATP from ADP in the presence of a proton or sodium gradient. F-type ATPases consist of two structural domains, F(1) containing the extramembraneous catalytic core and F(0) containing the membrane proton channel, linked together by a central stalk and a peripheral stalk. During catalysis, ATP synthesis in the catalytic domain of F(1) is coupled via a rotary mechanism of the central stalk subunits to proton translocation.</text>
</comment>
<comment type="function">
    <text evidence="1">This protein is part of the stalk that links CF(0) to CF(1). It either transmits conformational changes from CF(0) to CF(1) or is implicated in proton conduction.</text>
</comment>
<comment type="subunit">
    <text evidence="1">F-type ATPases have 2 components, F(1) - the catalytic core - and F(0) - the membrane proton channel. F(1) has five subunits: alpha(3), beta(3), gamma(1), delta(1), epsilon(1). F(0) has three main subunits: a(1), b(2) and c(10-14). The alpha and beta chains form an alternating ring which encloses part of the gamma chain. F(1) is attached to F(0) by a central stalk formed by the gamma and epsilon chains, while a peripheral stalk is formed by the delta and b chains.</text>
</comment>
<comment type="subcellular location">
    <subcellularLocation>
        <location evidence="1">Cell membrane</location>
        <topology evidence="1">Peripheral membrane protein</topology>
    </subcellularLocation>
</comment>
<comment type="similarity">
    <text evidence="1">Belongs to the ATPase delta chain family.</text>
</comment>
<evidence type="ECO:0000255" key="1">
    <source>
        <dbReference type="HAMAP-Rule" id="MF_01416"/>
    </source>
</evidence>
<protein>
    <recommendedName>
        <fullName evidence="1">ATP synthase subunit delta</fullName>
    </recommendedName>
    <alternativeName>
        <fullName evidence="1">ATP synthase F(1) sector subunit delta</fullName>
    </alternativeName>
    <alternativeName>
        <fullName evidence="1">F-type ATPase subunit delta</fullName>
        <shortName evidence="1">F-ATPase subunit delta</shortName>
    </alternativeName>
</protein>
<keyword id="KW-0066">ATP synthesis</keyword>
<keyword id="KW-1003">Cell membrane</keyword>
<keyword id="KW-0139">CF(1)</keyword>
<keyword id="KW-0375">Hydrogen ion transport</keyword>
<keyword id="KW-0406">Ion transport</keyword>
<keyword id="KW-0472">Membrane</keyword>
<keyword id="KW-0813">Transport</keyword>
<organism>
    <name type="scientific">Anoxybacillus flavithermus (strain DSM 21510 / WK1)</name>
    <dbReference type="NCBI Taxonomy" id="491915"/>
    <lineage>
        <taxon>Bacteria</taxon>
        <taxon>Bacillati</taxon>
        <taxon>Bacillota</taxon>
        <taxon>Bacilli</taxon>
        <taxon>Bacillales</taxon>
        <taxon>Anoxybacillaceae</taxon>
        <taxon>Anoxybacillus</taxon>
    </lineage>
</organism>
<feature type="chain" id="PRO_0000370882" description="ATP synthase subunit delta">
    <location>
        <begin position="1"/>
        <end position="178"/>
    </location>
</feature>
<sequence>MNKQVVAKRYASALFEIAKEQQLLDQLEQELRVVKQVFAQNETLLSVLNHPKIALAKKKALVQEAFANISTVLQHTLMLLLDRHRIDIVNDLADAFIALANEARGVAEAIVYSARPLTEDETNALADVFAKKVGVDTLRITNIIDKDVIGGVKVRIGNRIFDGSVSGKLARLQRQLTR</sequence>
<gene>
    <name evidence="1" type="primary">atpH</name>
    <name type="ordered locus">Aflv_2705</name>
</gene>
<proteinExistence type="inferred from homology"/>
<dbReference type="EMBL" id="CP000922">
    <property type="protein sequence ID" value="ACJ35058.1"/>
    <property type="molecule type" value="Genomic_DNA"/>
</dbReference>
<dbReference type="RefSeq" id="WP_012576186.1">
    <property type="nucleotide sequence ID" value="NC_011567.1"/>
</dbReference>
<dbReference type="SMR" id="B7GMF6"/>
<dbReference type="STRING" id="491915.Aflv_2705"/>
<dbReference type="GeneID" id="7038978"/>
<dbReference type="KEGG" id="afl:Aflv_2705"/>
<dbReference type="PATRIC" id="fig|491915.6.peg.2788"/>
<dbReference type="eggNOG" id="COG0712">
    <property type="taxonomic scope" value="Bacteria"/>
</dbReference>
<dbReference type="HOGENOM" id="CLU_085114_4_1_9"/>
<dbReference type="Proteomes" id="UP000000742">
    <property type="component" value="Chromosome"/>
</dbReference>
<dbReference type="GO" id="GO:0005886">
    <property type="term" value="C:plasma membrane"/>
    <property type="evidence" value="ECO:0007669"/>
    <property type="project" value="UniProtKB-SubCell"/>
</dbReference>
<dbReference type="GO" id="GO:0045259">
    <property type="term" value="C:proton-transporting ATP synthase complex"/>
    <property type="evidence" value="ECO:0007669"/>
    <property type="project" value="UniProtKB-KW"/>
</dbReference>
<dbReference type="GO" id="GO:0046933">
    <property type="term" value="F:proton-transporting ATP synthase activity, rotational mechanism"/>
    <property type="evidence" value="ECO:0007669"/>
    <property type="project" value="UniProtKB-UniRule"/>
</dbReference>
<dbReference type="Gene3D" id="1.10.520.20">
    <property type="entry name" value="N-terminal domain of the delta subunit of the F1F0-ATP synthase"/>
    <property type="match status" value="1"/>
</dbReference>
<dbReference type="HAMAP" id="MF_01416">
    <property type="entry name" value="ATP_synth_delta_bact"/>
    <property type="match status" value="1"/>
</dbReference>
<dbReference type="InterPro" id="IPR026015">
    <property type="entry name" value="ATP_synth_OSCP/delta_N_sf"/>
</dbReference>
<dbReference type="InterPro" id="IPR020781">
    <property type="entry name" value="ATPase_OSCP/d_CS"/>
</dbReference>
<dbReference type="InterPro" id="IPR000711">
    <property type="entry name" value="ATPase_OSCP/dsu"/>
</dbReference>
<dbReference type="NCBIfam" id="TIGR01145">
    <property type="entry name" value="ATP_synt_delta"/>
    <property type="match status" value="1"/>
</dbReference>
<dbReference type="NCBIfam" id="NF004403">
    <property type="entry name" value="PRK05758.2-4"/>
    <property type="match status" value="1"/>
</dbReference>
<dbReference type="PANTHER" id="PTHR11910">
    <property type="entry name" value="ATP SYNTHASE DELTA CHAIN"/>
    <property type="match status" value="1"/>
</dbReference>
<dbReference type="Pfam" id="PF00213">
    <property type="entry name" value="OSCP"/>
    <property type="match status" value="1"/>
</dbReference>
<dbReference type="PRINTS" id="PR00125">
    <property type="entry name" value="ATPASEDELTA"/>
</dbReference>
<dbReference type="SUPFAM" id="SSF47928">
    <property type="entry name" value="N-terminal domain of the delta subunit of the F1F0-ATP synthase"/>
    <property type="match status" value="1"/>
</dbReference>
<dbReference type="PROSITE" id="PS00389">
    <property type="entry name" value="ATPASE_DELTA"/>
    <property type="match status" value="1"/>
</dbReference>
<reference key="1">
    <citation type="journal article" date="2008" name="Genome Biol.">
        <title>Encapsulated in silica: genome, proteome and physiology of the thermophilic bacterium Anoxybacillus flavithermus WK1.</title>
        <authorList>
            <person name="Saw J.H."/>
            <person name="Mountain B.W."/>
            <person name="Feng L."/>
            <person name="Omelchenko M.V."/>
            <person name="Hou S."/>
            <person name="Saito J.A."/>
            <person name="Stott M.B."/>
            <person name="Li D."/>
            <person name="Zhao G."/>
            <person name="Wu J."/>
            <person name="Galperin M.Y."/>
            <person name="Koonin E.V."/>
            <person name="Makarova K.S."/>
            <person name="Wolf Y.I."/>
            <person name="Rigden D.J."/>
            <person name="Dunfield P.F."/>
            <person name="Wang L."/>
            <person name="Alam M."/>
        </authorList>
    </citation>
    <scope>NUCLEOTIDE SEQUENCE [LARGE SCALE GENOMIC DNA]</scope>
    <source>
        <strain>DSM 21510 / WK1</strain>
    </source>
</reference>
<name>ATPD_ANOFW</name>
<accession>B7GMF6</accession>